<accession>Q2RF96</accession>
<protein>
    <recommendedName>
        <fullName evidence="1">Polymerase basic protein 2</fullName>
    </recommendedName>
    <alternativeName>
        <fullName evidence="1">RNA-directed RNA polymerase subunit P3</fullName>
    </alternativeName>
</protein>
<evidence type="ECO:0000255" key="1">
    <source>
        <dbReference type="HAMAP-Rule" id="MF_04062"/>
    </source>
</evidence>
<reference key="1">
    <citation type="submission" date="2005-12" db="EMBL/GenBank/DDBJ databases">
        <title>The NIAID influenza genome sequencing project.</title>
        <authorList>
            <person name="Ghedin E."/>
            <person name="Spiro D."/>
            <person name="Miller N."/>
            <person name="Zaborsky J."/>
            <person name="Feldblyum T."/>
            <person name="Subbu V."/>
            <person name="Shumway M."/>
            <person name="Sparenborg J."/>
            <person name="Groveman L."/>
            <person name="Halpin R."/>
            <person name="Sitz J."/>
            <person name="Koo H."/>
            <person name="Salzberg S.L."/>
            <person name="Webster R.G."/>
            <person name="Hoffmann E."/>
            <person name="Krauss S."/>
            <person name="Naeve C."/>
            <person name="Bao Y."/>
            <person name="Bolotov P."/>
            <person name="Dernovoy D."/>
            <person name="Kiryutin B."/>
            <person name="Lipman D.J."/>
            <person name="Tatusova T."/>
        </authorList>
    </citation>
    <scope>NUCLEOTIDE SEQUENCE [GENOMIC RNA]</scope>
</reference>
<sequence length="759" mass="86109">MERIKELRNLMSQSRTREILTKTTVDHMAIIKKYTSGRQEKNPSLRMKWMMAMKYPITADKRITEMVPERNEQGQTLWSKMSDAGSDRVMVSPLAVTWWNRNGPVTSTVHYPKVYKTYFDKVERLKHGTFGPVHFRNQVKIRRRVDINPGHADLSAKEAQDVIMEVVFPNEVGARILTSESQLTITKEKKEELQDCKISPLMVAYMLERELVRKTRFLPVAGGTSSVYIEVLHLTQGTCWEQMYTPGGEVRNDDIDQSLIIAARNIVRRAAVSADPLASLLEMCHSTQIGGTRMVDILRQNPTEEQAVDICKAAMGLRISSSFSFGGFTFKRTSGSSIKREEEVLTGNLQTLKIRVHEGYEEFTMVGKRATAILRKATRRLVQLIVSGRDEQSIAEAIIVAMVFSQEDCMIKAVRGDLNFVNRANQRLNPMHQLLRHFQKDAKVLFQNWGIEHIDNVMGMVGVLPDMTPSTEMSMRGIRVSKMGVDEYSSTERVVVSIDRFLRVRDQRGNVLLSPEEVSETHGTERLTITYSSSMMWEINGPESVLVNTYQWIIRNWETVKIQWSQNPTMLYNKMEFEPFQSLVPKAIRGQYSGFVRTLFQQMRDVLGTFDTTQIIKLLPFAAAPPKQSRMQFSSLTVNVRGSGMRILVRGNSPVFNYNKTTKRLTILGKDAGTLIEDPDESTSGVESAVLRGFLILGKEDRRYGPALSINELSNLAKGEKANVLIGQGDVVLVMKRKRDSSILTDSQTATKRIRMAIN</sequence>
<organismHost>
    <name type="scientific">Aves</name>
    <dbReference type="NCBI Taxonomy" id="8782"/>
</organismHost>
<organismHost>
    <name type="scientific">Cetacea</name>
    <name type="common">whales</name>
    <dbReference type="NCBI Taxonomy" id="9721"/>
</organismHost>
<organismHost>
    <name type="scientific">Homo sapiens</name>
    <name type="common">Human</name>
    <dbReference type="NCBI Taxonomy" id="9606"/>
</organismHost>
<organismHost>
    <name type="scientific">Phocidae</name>
    <name type="common">true seals</name>
    <dbReference type="NCBI Taxonomy" id="9709"/>
</organismHost>
<organismHost>
    <name type="scientific">Sus scrofa</name>
    <name type="common">Pig</name>
    <dbReference type="NCBI Taxonomy" id="9823"/>
</organismHost>
<name>PB2_I76A6</name>
<dbReference type="EMBL" id="CY006842">
    <property type="protein sequence ID" value="ABC02276.1"/>
    <property type="molecule type" value="Genomic_RNA"/>
</dbReference>
<dbReference type="SMR" id="Q2RF96"/>
<dbReference type="PRO" id="PR:Q2RF96"/>
<dbReference type="Proteomes" id="UP000007792">
    <property type="component" value="Genome"/>
</dbReference>
<dbReference type="GO" id="GO:0033650">
    <property type="term" value="C:host cell mitochondrion"/>
    <property type="evidence" value="ECO:0007669"/>
    <property type="project" value="UniProtKB-SubCell"/>
</dbReference>
<dbReference type="GO" id="GO:0042025">
    <property type="term" value="C:host cell nucleus"/>
    <property type="evidence" value="ECO:0007669"/>
    <property type="project" value="UniProtKB-SubCell"/>
</dbReference>
<dbReference type="GO" id="GO:0044423">
    <property type="term" value="C:virion component"/>
    <property type="evidence" value="ECO:0007669"/>
    <property type="project" value="UniProtKB-UniRule"/>
</dbReference>
<dbReference type="GO" id="GO:0003723">
    <property type="term" value="F:RNA binding"/>
    <property type="evidence" value="ECO:0007669"/>
    <property type="project" value="UniProtKB-UniRule"/>
</dbReference>
<dbReference type="GO" id="GO:0003968">
    <property type="term" value="F:RNA-directed RNA polymerase activity"/>
    <property type="evidence" value="ECO:0007669"/>
    <property type="project" value="UniProtKB-UniRule"/>
</dbReference>
<dbReference type="GO" id="GO:0006370">
    <property type="term" value="P:7-methylguanosine mRNA capping"/>
    <property type="evidence" value="ECO:0007669"/>
    <property type="project" value="UniProtKB-UniRule"/>
</dbReference>
<dbReference type="GO" id="GO:0075526">
    <property type="term" value="P:cap snatching"/>
    <property type="evidence" value="ECO:0007669"/>
    <property type="project" value="UniProtKB-UniRule"/>
</dbReference>
<dbReference type="GO" id="GO:0006351">
    <property type="term" value="P:DNA-templated transcription"/>
    <property type="evidence" value="ECO:0007669"/>
    <property type="project" value="UniProtKB-UniRule"/>
</dbReference>
<dbReference type="GO" id="GO:0039545">
    <property type="term" value="P:symbiont-mediated suppression of host cytoplasmic pattern recognition receptor signaling pathway via inhibition of MAVS activity"/>
    <property type="evidence" value="ECO:0007669"/>
    <property type="project" value="UniProtKB-UniRule"/>
</dbReference>
<dbReference type="GO" id="GO:0039657">
    <property type="term" value="P:symbiont-mediated suppression of host gene expression"/>
    <property type="evidence" value="ECO:0007669"/>
    <property type="project" value="UniProtKB-KW"/>
</dbReference>
<dbReference type="GO" id="GO:0039523">
    <property type="term" value="P:symbiont-mediated suppression of host mRNA transcription via inhibition of RNA polymerase II activity"/>
    <property type="evidence" value="ECO:0007669"/>
    <property type="project" value="UniProtKB-UniRule"/>
</dbReference>
<dbReference type="GO" id="GO:0039694">
    <property type="term" value="P:viral RNA genome replication"/>
    <property type="evidence" value="ECO:0007669"/>
    <property type="project" value="InterPro"/>
</dbReference>
<dbReference type="FunFam" id="3.30.30.90:FF:000001">
    <property type="entry name" value="Polymerase basic protein 2"/>
    <property type="match status" value="1"/>
</dbReference>
<dbReference type="Gene3D" id="3.30.30.90">
    <property type="entry name" value="Polymerase Basic Protein 2, C-terminal domain"/>
    <property type="match status" value="1"/>
</dbReference>
<dbReference type="HAMAP" id="MF_04062">
    <property type="entry name" value="INV_PB2"/>
    <property type="match status" value="1"/>
</dbReference>
<dbReference type="InterPro" id="IPR049110">
    <property type="entry name" value="Flu_PB2_2nd"/>
</dbReference>
<dbReference type="InterPro" id="IPR049114">
    <property type="entry name" value="Flu_PB2_6th"/>
</dbReference>
<dbReference type="InterPro" id="IPR049115">
    <property type="entry name" value="Flu_PB2_C"/>
</dbReference>
<dbReference type="InterPro" id="IPR048298">
    <property type="entry name" value="Flu_PB2_CAP-bd"/>
</dbReference>
<dbReference type="InterPro" id="IPR049111">
    <property type="entry name" value="Flu_PB2_middle"/>
</dbReference>
<dbReference type="InterPro" id="IPR049106">
    <property type="entry name" value="Flu_PB2_N"/>
</dbReference>
<dbReference type="InterPro" id="IPR001591">
    <property type="entry name" value="INV_PB2"/>
</dbReference>
<dbReference type="InterPro" id="IPR049113">
    <property type="entry name" value="PB2_helical"/>
</dbReference>
<dbReference type="InterPro" id="IPR037258">
    <property type="entry name" value="PDB2_C"/>
</dbReference>
<dbReference type="Pfam" id="PF20947">
    <property type="entry name" value="Flu_PB2_1st"/>
    <property type="match status" value="1"/>
</dbReference>
<dbReference type="Pfam" id="PF20948">
    <property type="entry name" value="Flu_PB2_2nd"/>
    <property type="match status" value="1"/>
</dbReference>
<dbReference type="Pfam" id="PF20949">
    <property type="entry name" value="Flu_PB2_3rd"/>
    <property type="match status" value="1"/>
</dbReference>
<dbReference type="Pfam" id="PF20950">
    <property type="entry name" value="Flu_PB2_4th"/>
    <property type="match status" value="1"/>
</dbReference>
<dbReference type="Pfam" id="PF00604">
    <property type="entry name" value="Flu_PB2_5th"/>
    <property type="match status" value="1"/>
</dbReference>
<dbReference type="Pfam" id="PF20951">
    <property type="entry name" value="Flu_PB2_6th"/>
    <property type="match status" value="1"/>
</dbReference>
<dbReference type="Pfam" id="PF20952">
    <property type="entry name" value="Flu_PB2_7th"/>
    <property type="match status" value="1"/>
</dbReference>
<dbReference type="SUPFAM" id="SSF160453">
    <property type="entry name" value="PB2 C-terminal domain-like"/>
    <property type="match status" value="1"/>
</dbReference>
<gene>
    <name evidence="1" type="primary">PB2</name>
</gene>
<keyword id="KW-1157">Cap snatching</keyword>
<keyword id="KW-1262">Eukaryotic host gene expression shutoff by virus</keyword>
<keyword id="KW-1191">Eukaryotic host transcription shutoff by virus</keyword>
<keyword id="KW-1190">Host gene expression shutoff by virus</keyword>
<keyword id="KW-1045">Host mitochondrion</keyword>
<keyword id="KW-1048">Host nucleus</keyword>
<keyword id="KW-0945">Host-virus interaction</keyword>
<keyword id="KW-1090">Inhibition of host innate immune response by virus</keyword>
<keyword id="KW-1097">Inhibition of host MAVS by virus</keyword>
<keyword id="KW-1113">Inhibition of host RLR pathway by virus</keyword>
<keyword id="KW-1104">Inhibition of host RNA polymerase II by virus</keyword>
<keyword id="KW-0506">mRNA capping</keyword>
<keyword id="KW-0507">mRNA processing</keyword>
<keyword id="KW-0899">Viral immunoevasion</keyword>
<keyword id="KW-1195">Viral transcription</keyword>
<keyword id="KW-0946">Virion</keyword>
<comment type="function">
    <text evidence="1">Plays an essential role in transcription initiation and cap-stealing mechanism, in which cellular capped pre-mRNAs are used to generate primers for viral transcription. Recognizes and binds the 7-methylguanosine-containing cap of the target pre-RNA which is subsequently cleaved after 10-13 nucleotides by the viral protein PA. Plays a role in the initiation of the viral genome replication and modulates the activity of the ribonucleoprotein (RNP) complex. In addition, participates in the inhibition of type I interferon induction through interaction with and inhibition of the host mitochondrial antiviral signaling protein MAVS.</text>
</comment>
<comment type="subunit">
    <text evidence="1">Influenza RNA polymerase is composed of three subunits: PB1, PB2 and PA. Interacts (via N-terminus) with PB1 (via C-terminus). Interacts with nucleoprotein NP (via N-terminus). Interacts (via N-terminus) with host MAVS (via N-terminus); this interaction inhibits host innate immune response.</text>
</comment>
<comment type="subcellular location">
    <subcellularLocation>
        <location evidence="1">Virion</location>
    </subcellularLocation>
    <subcellularLocation>
        <location evidence="1">Host nucleus</location>
    </subcellularLocation>
    <subcellularLocation>
        <location evidence="1">Host mitochondrion</location>
    </subcellularLocation>
</comment>
<comment type="similarity">
    <text evidence="1">Belongs to the influenza viruses PB2 family.</text>
</comment>
<proteinExistence type="inferred from homology"/>
<organism>
    <name type="scientific">Influenza A virus (strain A/Memphis/110/1976 H3N2)</name>
    <dbReference type="NCBI Taxonomy" id="383581"/>
    <lineage>
        <taxon>Viruses</taxon>
        <taxon>Riboviria</taxon>
        <taxon>Orthornavirae</taxon>
        <taxon>Negarnaviricota</taxon>
        <taxon>Polyploviricotina</taxon>
        <taxon>Insthoviricetes</taxon>
        <taxon>Articulavirales</taxon>
        <taxon>Orthomyxoviridae</taxon>
        <taxon>Alphainfluenzavirus</taxon>
        <taxon>Alphainfluenzavirus influenzae</taxon>
        <taxon>Influenza A virus</taxon>
    </lineage>
</organism>
<feature type="chain" id="PRO_0000279643" description="Polymerase basic protein 2">
    <location>
        <begin position="1"/>
        <end position="759"/>
    </location>
</feature>
<feature type="short sequence motif" description="Nuclear localization signal" evidence="1">
    <location>
        <begin position="736"/>
        <end position="739"/>
    </location>
</feature>
<feature type="site" description="Mammalian adaptation" evidence="1">
    <location>
        <position position="627"/>
    </location>
</feature>